<dbReference type="EMBL" id="LC416798">
    <property type="protein sequence ID" value="BBF98064.1"/>
    <property type="molecule type" value="mRNA"/>
</dbReference>
<dbReference type="SMR" id="A0A348G6J1"/>
<dbReference type="GO" id="GO:0005576">
    <property type="term" value="C:extracellular region"/>
    <property type="evidence" value="ECO:0007669"/>
    <property type="project" value="UniProtKB-SubCell"/>
</dbReference>
<accession>A0A348G6J1</accession>
<organism>
    <name type="scientific">Odontomachus monticola</name>
    <name type="common">Trap-jaw ant</name>
    <dbReference type="NCBI Taxonomy" id="613454"/>
    <lineage>
        <taxon>Eukaryota</taxon>
        <taxon>Metazoa</taxon>
        <taxon>Ecdysozoa</taxon>
        <taxon>Arthropoda</taxon>
        <taxon>Hexapoda</taxon>
        <taxon>Insecta</taxon>
        <taxon>Pterygota</taxon>
        <taxon>Neoptera</taxon>
        <taxon>Endopterygota</taxon>
        <taxon>Hymenoptera</taxon>
        <taxon>Apocrita</taxon>
        <taxon>Aculeata</taxon>
        <taxon>Formicoidea</taxon>
        <taxon>Formicidae</taxon>
        <taxon>Ponerinae</taxon>
        <taxon>Ponerini</taxon>
        <taxon>Odontomachus</taxon>
    </lineage>
</organism>
<keyword id="KW-0964">Secreted</keyword>
<keyword id="KW-0732">Signal</keyword>
<feature type="signal peptide" evidence="3">
    <location>
        <begin position="1"/>
        <end position="27"/>
    </location>
</feature>
<feature type="propeptide" id="PRO_0000447091" evidence="4">
    <location>
        <begin position="28"/>
        <end position="45"/>
    </location>
</feature>
<feature type="peptide" id="PRO_5016831121" description="U-poneritoxin(01)-Om7a" evidence="5 6">
    <location>
        <begin position="46"/>
        <end position="70"/>
    </location>
</feature>
<reference key="1">
    <citation type="journal article" date="2017" name="Toxins">
        <title>Combined venom gland transcriptomic and venom peptidomic analysis of the predatory ant Odontomachus monticola.</title>
        <authorList>
            <person name="Kazuma K."/>
            <person name="Masuko K."/>
            <person name="Konno K."/>
            <person name="Inagaki H."/>
        </authorList>
    </citation>
    <scope>NUCLEOTIDE SEQUENCE [MRNA]</scope>
    <source>
        <tissue>Venom gland</tissue>
    </source>
</reference>
<reference key="2">
    <citation type="journal article" date="2019" name="Toxins">
        <title>Mass spectrometry analysis and biological characterization of the predatory ant Odontomachus monticola venom and venom sac components.</title>
        <authorList>
            <person name="Tani N."/>
            <person name="Kazuma K."/>
            <person name="Ohtsuka Y."/>
            <person name="Shigeri Y."/>
            <person name="Masuko K."/>
            <person name="Konno K."/>
            <person name="Inagaki H."/>
        </authorList>
    </citation>
    <scope>PARTIAL IDENTIFICATION BY MASS SPECTROMETRY</scope>
    <scope>SUBCELLULAR LOCATION</scope>
    <source>
        <tissue>Venom</tissue>
    </source>
</reference>
<proteinExistence type="evidence at protein level"/>
<protein>
    <recommendedName>
        <fullName evidence="1">U-poneritoxin(01)-Om7a</fullName>
        <shortName evidence="1">U-PONTX(01)-Om7a</shortName>
    </recommendedName>
    <alternativeName>
        <fullName evidence="7">Pilosulin-like peptide 9</fullName>
        <shortName evidence="2">PLP9</shortName>
    </alternativeName>
    <alternativeName>
        <fullName evidence="4">Poneratoxin</fullName>
    </alternativeName>
</protein>
<sequence length="72" mass="7527">MKPSGLTFAFLVVFMMAIMYNSVQVTADADADAEAEALANALAEAGILMYQGLGEKSDGLDQGQNGKVVAKK</sequence>
<evidence type="ECO:0000250" key="1">
    <source>
        <dbReference type="UniProtKB" id="A0A348G5W2"/>
    </source>
</evidence>
<evidence type="ECO:0000250" key="2">
    <source>
        <dbReference type="UniProtKB" id="A0A348G6I7"/>
    </source>
</evidence>
<evidence type="ECO:0000255" key="3"/>
<evidence type="ECO:0000305" key="4"/>
<evidence type="ECO:0000305" key="5">
    <source>
    </source>
</evidence>
<evidence type="ECO:0000305" key="6">
    <source>
    </source>
</evidence>
<evidence type="ECO:0000312" key="7">
    <source>
        <dbReference type="EMBL" id="BBF98064.1"/>
    </source>
</evidence>
<comment type="function">
    <text evidence="6">Peptide with unknown function that does not resemble any other pilosulin-like peptide and appears to have a coiled coil structure.</text>
</comment>
<comment type="subcellular location">
    <subcellularLocation>
        <location evidence="5">Secreted</location>
    </subcellularLocation>
</comment>
<comment type="tissue specificity">
    <text evidence="5">Expressed by the venom gland.</text>
</comment>
<comment type="similarity">
    <text evidence="4">Belongs to the formicidae venom precursor-01 superfamily.</text>
</comment>
<name>TX19A_ODOMO</name>